<accession>B0R4W3</accession>
<proteinExistence type="inferred from homology"/>
<dbReference type="EMBL" id="AM774415">
    <property type="protein sequence ID" value="CAP13778.1"/>
    <property type="molecule type" value="Genomic_DNA"/>
</dbReference>
<dbReference type="RefSeq" id="WP_010902796.1">
    <property type="nucleotide sequence ID" value="NC_010364.1"/>
</dbReference>
<dbReference type="SMR" id="B0R4W3"/>
<dbReference type="EnsemblBacteria" id="CAP13778">
    <property type="protein sequence ID" value="CAP13778"/>
    <property type="gene ID" value="OE_2603R"/>
</dbReference>
<dbReference type="KEGG" id="hsl:OE_2603R"/>
<dbReference type="HOGENOM" id="CLU_074237_4_0_2"/>
<dbReference type="PhylomeDB" id="B0R4W3"/>
<dbReference type="Proteomes" id="UP000001321">
    <property type="component" value="Chromosome"/>
</dbReference>
<dbReference type="GO" id="GO:0015934">
    <property type="term" value="C:large ribosomal subunit"/>
    <property type="evidence" value="ECO:0007669"/>
    <property type="project" value="TreeGrafter"/>
</dbReference>
<dbReference type="GO" id="GO:0070180">
    <property type="term" value="F:large ribosomal subunit rRNA binding"/>
    <property type="evidence" value="ECO:0007669"/>
    <property type="project" value="UniProtKB-UniRule"/>
</dbReference>
<dbReference type="GO" id="GO:0003735">
    <property type="term" value="F:structural constituent of ribosome"/>
    <property type="evidence" value="ECO:0007669"/>
    <property type="project" value="InterPro"/>
</dbReference>
<dbReference type="GO" id="GO:0006412">
    <property type="term" value="P:translation"/>
    <property type="evidence" value="ECO:0007669"/>
    <property type="project" value="UniProtKB-UniRule"/>
</dbReference>
<dbReference type="CDD" id="cd00349">
    <property type="entry name" value="Ribosomal_L11"/>
    <property type="match status" value="1"/>
</dbReference>
<dbReference type="FunFam" id="1.10.10.250:FF:000006">
    <property type="entry name" value="50S ribosomal protein L11"/>
    <property type="match status" value="1"/>
</dbReference>
<dbReference type="Gene3D" id="1.10.10.250">
    <property type="entry name" value="Ribosomal protein L11, C-terminal domain"/>
    <property type="match status" value="1"/>
</dbReference>
<dbReference type="Gene3D" id="3.30.1550.10">
    <property type="entry name" value="Ribosomal protein L11/L12, N-terminal domain"/>
    <property type="match status" value="1"/>
</dbReference>
<dbReference type="HAMAP" id="MF_00736">
    <property type="entry name" value="Ribosomal_uL11"/>
    <property type="match status" value="1"/>
</dbReference>
<dbReference type="InterPro" id="IPR000911">
    <property type="entry name" value="Ribosomal_uL11"/>
</dbReference>
<dbReference type="InterPro" id="IPR020783">
    <property type="entry name" value="Ribosomal_uL11_C"/>
</dbReference>
<dbReference type="InterPro" id="IPR036769">
    <property type="entry name" value="Ribosomal_uL11_C_sf"/>
</dbReference>
<dbReference type="InterPro" id="IPR020785">
    <property type="entry name" value="Ribosomal_uL11_CS"/>
</dbReference>
<dbReference type="InterPro" id="IPR020784">
    <property type="entry name" value="Ribosomal_uL11_N"/>
</dbReference>
<dbReference type="InterPro" id="IPR036796">
    <property type="entry name" value="Ribosomal_uL11_N_sf"/>
</dbReference>
<dbReference type="NCBIfam" id="NF002232">
    <property type="entry name" value="PRK01143.1"/>
    <property type="match status" value="1"/>
</dbReference>
<dbReference type="PANTHER" id="PTHR11661">
    <property type="entry name" value="60S RIBOSOMAL PROTEIN L12"/>
    <property type="match status" value="1"/>
</dbReference>
<dbReference type="PANTHER" id="PTHR11661:SF1">
    <property type="entry name" value="LARGE RIBOSOMAL SUBUNIT PROTEIN UL11M"/>
    <property type="match status" value="1"/>
</dbReference>
<dbReference type="Pfam" id="PF00298">
    <property type="entry name" value="Ribosomal_L11"/>
    <property type="match status" value="1"/>
</dbReference>
<dbReference type="Pfam" id="PF03946">
    <property type="entry name" value="Ribosomal_L11_N"/>
    <property type="match status" value="1"/>
</dbReference>
<dbReference type="SMART" id="SM00649">
    <property type="entry name" value="RL11"/>
    <property type="match status" value="1"/>
</dbReference>
<dbReference type="SUPFAM" id="SSF54747">
    <property type="entry name" value="Ribosomal L11/L12e N-terminal domain"/>
    <property type="match status" value="1"/>
</dbReference>
<dbReference type="SUPFAM" id="SSF46906">
    <property type="entry name" value="Ribosomal protein L11, C-terminal domain"/>
    <property type="match status" value="1"/>
</dbReference>
<dbReference type="PROSITE" id="PS00359">
    <property type="entry name" value="RIBOSOMAL_L11"/>
    <property type="match status" value="1"/>
</dbReference>
<keyword id="KW-0687">Ribonucleoprotein</keyword>
<keyword id="KW-0689">Ribosomal protein</keyword>
<keyword id="KW-0694">RNA-binding</keyword>
<keyword id="KW-0699">rRNA-binding</keyword>
<protein>
    <recommendedName>
        <fullName evidence="1">Large ribosomal subunit protein uL11</fullName>
    </recommendedName>
    <alternativeName>
        <fullName evidence="3">50S ribosomal protein L11</fullName>
    </alternativeName>
</protein>
<organism>
    <name type="scientific">Halobacterium salinarum (strain ATCC 29341 / DSM 671 / R1)</name>
    <dbReference type="NCBI Taxonomy" id="478009"/>
    <lineage>
        <taxon>Archaea</taxon>
        <taxon>Methanobacteriati</taxon>
        <taxon>Methanobacteriota</taxon>
        <taxon>Stenosarchaea group</taxon>
        <taxon>Halobacteria</taxon>
        <taxon>Halobacteriales</taxon>
        <taxon>Halobacteriaceae</taxon>
        <taxon>Halobacterium</taxon>
        <taxon>Halobacterium salinarum NRC-34001</taxon>
    </lineage>
</organism>
<evidence type="ECO:0000255" key="1">
    <source>
        <dbReference type="HAMAP-Rule" id="MF_00736"/>
    </source>
</evidence>
<evidence type="ECO:0000256" key="2">
    <source>
        <dbReference type="SAM" id="MobiDB-lite"/>
    </source>
</evidence>
<evidence type="ECO:0000305" key="3"/>
<name>RL11_HALS3</name>
<sequence>MAETIEVLVAGGQADPGPPLGPELGPTPVDVQAVVQEINDQTEAFDGTEVPVTIEYEDDGSFSIEVGVPPTAALVKDEAGFDTGSGEPQENFVADLSIEQLKTIAEQKKPDLLAYDARNAAKEVAGTCASLGVTIEGEDARTFNERVDDGDYDDVLGDELAAA</sequence>
<gene>
    <name evidence="1" type="primary">rpl11</name>
    <name type="ordered locus">OE_2603R</name>
</gene>
<reference key="1">
    <citation type="journal article" date="2008" name="Genomics">
        <title>Evolution in the laboratory: the genome of Halobacterium salinarum strain R1 compared to that of strain NRC-1.</title>
        <authorList>
            <person name="Pfeiffer F."/>
            <person name="Schuster S.C."/>
            <person name="Broicher A."/>
            <person name="Falb M."/>
            <person name="Palm P."/>
            <person name="Rodewald K."/>
            <person name="Ruepp A."/>
            <person name="Soppa J."/>
            <person name="Tittor J."/>
            <person name="Oesterhelt D."/>
        </authorList>
    </citation>
    <scope>NUCLEOTIDE SEQUENCE [LARGE SCALE GENOMIC DNA]</scope>
    <source>
        <strain>ATCC 29341 / DSM 671 / R1</strain>
    </source>
</reference>
<feature type="chain" id="PRO_1000195753" description="Large ribosomal subunit protein uL11">
    <location>
        <begin position="1"/>
        <end position="163"/>
    </location>
</feature>
<feature type="region of interest" description="Disordered" evidence="2">
    <location>
        <begin position="1"/>
        <end position="26"/>
    </location>
</feature>
<comment type="function">
    <text evidence="1">Forms part of the ribosomal stalk which helps the ribosome interact with GTP-bound translation factors.</text>
</comment>
<comment type="subunit">
    <text evidence="1">Part of the ribosomal stalk of the 50S ribosomal subunit. Interacts with L10 and the large rRNA to form the base of the stalk. L10 forms an elongated spine to which L12 dimers bind in a sequential fashion forming a multimeric L10(L12)X complex.</text>
</comment>
<comment type="similarity">
    <text evidence="1">Belongs to the universal ribosomal protein uL11 family.</text>
</comment>